<gene>
    <name evidence="1" type="primary">ubiA</name>
    <name type="ordered locus">KPN78578_43590</name>
    <name type="ORF">KPN_04428</name>
</gene>
<dbReference type="EC" id="2.5.1.39" evidence="1"/>
<dbReference type="EMBL" id="CP000647">
    <property type="protein sequence ID" value="ABR79783.1"/>
    <property type="molecule type" value="Genomic_DNA"/>
</dbReference>
<dbReference type="RefSeq" id="WP_002884808.1">
    <property type="nucleotide sequence ID" value="NC_009648.1"/>
</dbReference>
<dbReference type="SMR" id="A6TGU9"/>
<dbReference type="STRING" id="272620.KPN_04428"/>
<dbReference type="PaxDb" id="272620-KPN_04428"/>
<dbReference type="EnsemblBacteria" id="ABR79783">
    <property type="protein sequence ID" value="ABR79783"/>
    <property type="gene ID" value="KPN_04428"/>
</dbReference>
<dbReference type="KEGG" id="kpn:KPN_04428"/>
<dbReference type="HOGENOM" id="CLU_034879_1_0_6"/>
<dbReference type="UniPathway" id="UPA00232"/>
<dbReference type="Proteomes" id="UP000000265">
    <property type="component" value="Chromosome"/>
</dbReference>
<dbReference type="GO" id="GO:0005886">
    <property type="term" value="C:plasma membrane"/>
    <property type="evidence" value="ECO:0007669"/>
    <property type="project" value="UniProtKB-SubCell"/>
</dbReference>
<dbReference type="GO" id="GO:0008412">
    <property type="term" value="F:4-hydroxybenzoate polyprenyltransferase activity"/>
    <property type="evidence" value="ECO:0007669"/>
    <property type="project" value="UniProtKB-UniRule"/>
</dbReference>
<dbReference type="GO" id="GO:0006744">
    <property type="term" value="P:ubiquinone biosynthetic process"/>
    <property type="evidence" value="ECO:0007669"/>
    <property type="project" value="UniProtKB-UniRule"/>
</dbReference>
<dbReference type="CDD" id="cd13959">
    <property type="entry name" value="PT_UbiA_COQ2"/>
    <property type="match status" value="1"/>
</dbReference>
<dbReference type="FunFam" id="1.10.357.140:FF:000002">
    <property type="entry name" value="4-hydroxybenzoate octaprenyltransferase"/>
    <property type="match status" value="1"/>
</dbReference>
<dbReference type="FunFam" id="1.20.120.1780:FF:000001">
    <property type="entry name" value="4-hydroxybenzoate octaprenyltransferase"/>
    <property type="match status" value="1"/>
</dbReference>
<dbReference type="Gene3D" id="1.10.357.140">
    <property type="entry name" value="UbiA prenyltransferase"/>
    <property type="match status" value="1"/>
</dbReference>
<dbReference type="Gene3D" id="1.20.120.1780">
    <property type="entry name" value="UbiA prenyltransferase"/>
    <property type="match status" value="1"/>
</dbReference>
<dbReference type="HAMAP" id="MF_01635">
    <property type="entry name" value="UbiA"/>
    <property type="match status" value="1"/>
</dbReference>
<dbReference type="InterPro" id="IPR006370">
    <property type="entry name" value="HB_polyprenyltransferase-like"/>
</dbReference>
<dbReference type="InterPro" id="IPR039653">
    <property type="entry name" value="Prenyltransferase"/>
</dbReference>
<dbReference type="InterPro" id="IPR000537">
    <property type="entry name" value="UbiA_prenyltransferase"/>
</dbReference>
<dbReference type="InterPro" id="IPR030470">
    <property type="entry name" value="UbiA_prenylTrfase_CS"/>
</dbReference>
<dbReference type="InterPro" id="IPR044878">
    <property type="entry name" value="UbiA_sf"/>
</dbReference>
<dbReference type="NCBIfam" id="TIGR01474">
    <property type="entry name" value="ubiA_proteo"/>
    <property type="match status" value="1"/>
</dbReference>
<dbReference type="PANTHER" id="PTHR11048:SF28">
    <property type="entry name" value="4-HYDROXYBENZOATE POLYPRENYLTRANSFERASE, MITOCHONDRIAL"/>
    <property type="match status" value="1"/>
</dbReference>
<dbReference type="PANTHER" id="PTHR11048">
    <property type="entry name" value="PRENYLTRANSFERASES"/>
    <property type="match status" value="1"/>
</dbReference>
<dbReference type="Pfam" id="PF01040">
    <property type="entry name" value="UbiA"/>
    <property type="match status" value="1"/>
</dbReference>
<dbReference type="PROSITE" id="PS00943">
    <property type="entry name" value="UBIA"/>
    <property type="match status" value="1"/>
</dbReference>
<name>UBIA_KLEP7</name>
<evidence type="ECO:0000255" key="1">
    <source>
        <dbReference type="HAMAP-Rule" id="MF_01635"/>
    </source>
</evidence>
<accession>A6TGU9</accession>
<reference key="1">
    <citation type="submission" date="2006-09" db="EMBL/GenBank/DDBJ databases">
        <authorList>
            <consortium name="The Klebsiella pneumonia Genome Sequencing Project"/>
            <person name="McClelland M."/>
            <person name="Sanderson E.K."/>
            <person name="Spieth J."/>
            <person name="Clifton W.S."/>
            <person name="Latreille P."/>
            <person name="Sabo A."/>
            <person name="Pepin K."/>
            <person name="Bhonagiri V."/>
            <person name="Porwollik S."/>
            <person name="Ali J."/>
            <person name="Wilson R.K."/>
        </authorList>
    </citation>
    <scope>NUCLEOTIDE SEQUENCE [LARGE SCALE GENOMIC DNA]</scope>
    <source>
        <strain>ATCC 700721 / MGH 78578</strain>
    </source>
</reference>
<keyword id="KW-0997">Cell inner membrane</keyword>
<keyword id="KW-1003">Cell membrane</keyword>
<keyword id="KW-0460">Magnesium</keyword>
<keyword id="KW-0472">Membrane</keyword>
<keyword id="KW-0808">Transferase</keyword>
<keyword id="KW-0812">Transmembrane</keyword>
<keyword id="KW-1133">Transmembrane helix</keyword>
<keyword id="KW-0831">Ubiquinone biosynthesis</keyword>
<feature type="chain" id="PRO_1000069823" description="4-hydroxybenzoate octaprenyltransferase">
    <location>
        <begin position="1"/>
        <end position="288"/>
    </location>
</feature>
<feature type="transmembrane region" description="Helical" evidence="1">
    <location>
        <begin position="33"/>
        <end position="53"/>
    </location>
</feature>
<feature type="transmembrane region" description="Helical" evidence="1">
    <location>
        <begin position="99"/>
        <end position="119"/>
    </location>
</feature>
<feature type="transmembrane region" description="Helical" evidence="1">
    <location>
        <begin position="163"/>
        <end position="183"/>
    </location>
</feature>
<feature type="transmembrane region" description="Helical" evidence="1">
    <location>
        <begin position="213"/>
        <end position="233"/>
    </location>
</feature>
<feature type="transmembrane region" description="Helical" evidence="1">
    <location>
        <begin position="234"/>
        <end position="254"/>
    </location>
</feature>
<feature type="transmembrane region" description="Helical" evidence="1">
    <location>
        <begin position="268"/>
        <end position="288"/>
    </location>
</feature>
<organism>
    <name type="scientific">Klebsiella pneumoniae subsp. pneumoniae (strain ATCC 700721 / MGH 78578)</name>
    <dbReference type="NCBI Taxonomy" id="272620"/>
    <lineage>
        <taxon>Bacteria</taxon>
        <taxon>Pseudomonadati</taxon>
        <taxon>Pseudomonadota</taxon>
        <taxon>Gammaproteobacteria</taxon>
        <taxon>Enterobacterales</taxon>
        <taxon>Enterobacteriaceae</taxon>
        <taxon>Klebsiella/Raoultella group</taxon>
        <taxon>Klebsiella</taxon>
        <taxon>Klebsiella pneumoniae complex</taxon>
    </lineage>
</organism>
<sequence>MEWSLSQNKLLAFHRLMRTDKPIGALLLLWPTLWALWVASPGVPPLWILAVFVAGVWLMRAAGCVVNDYADRKFDGHVKRTARRPLPSGDVTEKEARTLFIVLVLLSFLLVLTLNTMTILLSVAALALAWVYPFMKRYTHLPQVVLGAAFGWSIPMAFSAVSESLPLSCWLMFLANILWAVAYDTQYAMVDRDDDVKIGIKSTAILFGENDRLIIGILQVAVLALMGAVGWLNGLGWEYYWSLFVAAGLFGWQQKLIFNRDRDNCFKAFMNNNYVGLVLFLGLAMSYL</sequence>
<comment type="function">
    <text evidence="1">Catalyzes the prenylation of para-hydroxybenzoate (PHB) with an all-trans polyprenyl group. Mediates the second step in the final reaction sequence of ubiquinone-8 (UQ-8) biosynthesis, which is the condensation of the polyisoprenoid side chain with PHB, generating the first membrane-bound Q intermediate 3-octaprenyl-4-hydroxybenzoate.</text>
</comment>
<comment type="catalytic activity">
    <reaction evidence="1">
        <text>all-trans-octaprenyl diphosphate + 4-hydroxybenzoate = 4-hydroxy-3-(all-trans-octaprenyl)benzoate + diphosphate</text>
        <dbReference type="Rhea" id="RHEA:27782"/>
        <dbReference type="ChEBI" id="CHEBI:1617"/>
        <dbReference type="ChEBI" id="CHEBI:17879"/>
        <dbReference type="ChEBI" id="CHEBI:33019"/>
        <dbReference type="ChEBI" id="CHEBI:57711"/>
        <dbReference type="EC" id="2.5.1.39"/>
    </reaction>
</comment>
<comment type="cofactor">
    <cofactor evidence="1">
        <name>Mg(2+)</name>
        <dbReference type="ChEBI" id="CHEBI:18420"/>
    </cofactor>
</comment>
<comment type="pathway">
    <text evidence="1">Cofactor biosynthesis; ubiquinone biosynthesis.</text>
</comment>
<comment type="subcellular location">
    <subcellularLocation>
        <location evidence="1">Cell inner membrane</location>
        <topology evidence="1">Multi-pass membrane protein</topology>
    </subcellularLocation>
</comment>
<comment type="similarity">
    <text evidence="1">Belongs to the UbiA prenyltransferase family.</text>
</comment>
<proteinExistence type="inferred from homology"/>
<protein>
    <recommendedName>
        <fullName evidence="1">4-hydroxybenzoate octaprenyltransferase</fullName>
        <ecNumber evidence="1">2.5.1.39</ecNumber>
    </recommendedName>
    <alternativeName>
        <fullName evidence="1">4-HB polyprenyltransferase</fullName>
    </alternativeName>
</protein>